<reference key="1">
    <citation type="journal article" date="2009" name="PLoS Genet.">
        <title>Organised genome dynamics in the Escherichia coli species results in highly diverse adaptive paths.</title>
        <authorList>
            <person name="Touchon M."/>
            <person name="Hoede C."/>
            <person name="Tenaillon O."/>
            <person name="Barbe V."/>
            <person name="Baeriswyl S."/>
            <person name="Bidet P."/>
            <person name="Bingen E."/>
            <person name="Bonacorsi S."/>
            <person name="Bouchier C."/>
            <person name="Bouvet O."/>
            <person name="Calteau A."/>
            <person name="Chiapello H."/>
            <person name="Clermont O."/>
            <person name="Cruveiller S."/>
            <person name="Danchin A."/>
            <person name="Diard M."/>
            <person name="Dossat C."/>
            <person name="Karoui M.E."/>
            <person name="Frapy E."/>
            <person name="Garry L."/>
            <person name="Ghigo J.M."/>
            <person name="Gilles A.M."/>
            <person name="Johnson J."/>
            <person name="Le Bouguenec C."/>
            <person name="Lescat M."/>
            <person name="Mangenot S."/>
            <person name="Martinez-Jehanne V."/>
            <person name="Matic I."/>
            <person name="Nassif X."/>
            <person name="Oztas S."/>
            <person name="Petit M.A."/>
            <person name="Pichon C."/>
            <person name="Rouy Z."/>
            <person name="Ruf C.S."/>
            <person name="Schneider D."/>
            <person name="Tourret J."/>
            <person name="Vacherie B."/>
            <person name="Vallenet D."/>
            <person name="Medigue C."/>
            <person name="Rocha E.P.C."/>
            <person name="Denamur E."/>
        </authorList>
    </citation>
    <scope>NUCLEOTIDE SEQUENCE [LARGE SCALE GENOMIC DNA]</scope>
    <source>
        <strain>IAI39 / ExPEC</strain>
    </source>
</reference>
<proteinExistence type="inferred from homology"/>
<feature type="chain" id="PRO_1000146713" description="p-hydroxybenzoic acid efflux pump subunit AaeA">
    <location>
        <begin position="1"/>
        <end position="310"/>
    </location>
</feature>
<feature type="transmembrane region" description="Helical" evidence="1">
    <location>
        <begin position="12"/>
        <end position="32"/>
    </location>
</feature>
<protein>
    <recommendedName>
        <fullName evidence="1">p-hydroxybenzoic acid efflux pump subunit AaeA</fullName>
        <shortName evidence="1">pHBA efflux pump protein A</shortName>
    </recommendedName>
</protein>
<gene>
    <name evidence="1" type="primary">aaeA</name>
    <name type="ordered locus">ECIAI39_3732</name>
</gene>
<name>AAEA_ECO7I</name>
<accession>B7NLF9</accession>
<organism>
    <name type="scientific">Escherichia coli O7:K1 (strain IAI39 / ExPEC)</name>
    <dbReference type="NCBI Taxonomy" id="585057"/>
    <lineage>
        <taxon>Bacteria</taxon>
        <taxon>Pseudomonadati</taxon>
        <taxon>Pseudomonadota</taxon>
        <taxon>Gammaproteobacteria</taxon>
        <taxon>Enterobacterales</taxon>
        <taxon>Enterobacteriaceae</taxon>
        <taxon>Escherichia</taxon>
    </lineage>
</organism>
<evidence type="ECO:0000255" key="1">
    <source>
        <dbReference type="HAMAP-Rule" id="MF_01544"/>
    </source>
</evidence>
<keyword id="KW-0997">Cell inner membrane</keyword>
<keyword id="KW-1003">Cell membrane</keyword>
<keyword id="KW-0472">Membrane</keyword>
<keyword id="KW-0812">Transmembrane</keyword>
<keyword id="KW-1133">Transmembrane helix</keyword>
<keyword id="KW-0813">Transport</keyword>
<sequence>MKTLIRKFSRTAITVVLVILAFIAIFNAWVYYTESPWTRDARFSADVVAIAPDVSGLITQVNVHDNQLVKKGQVLFIIDQPRYQKALEEAQADVAYYQVLAQEKRQEAGRRNRLGVQAMSREEIDQANNVLQTVLHQLAKAQATRDLAKLDLERTVIRAPADGWVTNLNVYTGEFITRGSTAVALVKQNSFYVLAYMEETKLEGVRPGYRAEITPLGSNKVLKGTVDSVAAGVTNASSTRDDKGMATIDSNLEWVRLAQRVPVRIRLDNQQENIWPAGTTATVVVTGKQDRDESQDSFFRKMAHRLREFG</sequence>
<dbReference type="EMBL" id="CU928164">
    <property type="protein sequence ID" value="CAR19848.1"/>
    <property type="molecule type" value="Genomic_DNA"/>
</dbReference>
<dbReference type="RefSeq" id="WP_000854023.1">
    <property type="nucleotide sequence ID" value="NC_011750.1"/>
</dbReference>
<dbReference type="RefSeq" id="YP_002409635.1">
    <property type="nucleotide sequence ID" value="NC_011750.1"/>
</dbReference>
<dbReference type="SMR" id="B7NLF9"/>
<dbReference type="STRING" id="585057.ECIAI39_3732"/>
<dbReference type="KEGG" id="ect:ECIAI39_3732"/>
<dbReference type="PATRIC" id="fig|585057.6.peg.3868"/>
<dbReference type="HOGENOM" id="CLU_018816_15_2_6"/>
<dbReference type="Proteomes" id="UP000000749">
    <property type="component" value="Chromosome"/>
</dbReference>
<dbReference type="GO" id="GO:0005886">
    <property type="term" value="C:plasma membrane"/>
    <property type="evidence" value="ECO:0007669"/>
    <property type="project" value="UniProtKB-SubCell"/>
</dbReference>
<dbReference type="GO" id="GO:0022857">
    <property type="term" value="F:transmembrane transporter activity"/>
    <property type="evidence" value="ECO:0007669"/>
    <property type="project" value="UniProtKB-UniRule"/>
</dbReference>
<dbReference type="FunFam" id="2.40.30.170:FF:000002">
    <property type="entry name" value="p-hydroxybenzoic acid efflux pump subunit AaeA"/>
    <property type="match status" value="1"/>
</dbReference>
<dbReference type="FunFam" id="2.40.50.100:FF:000018">
    <property type="entry name" value="p-hydroxybenzoic acid efflux pump subunit AaeA"/>
    <property type="match status" value="1"/>
</dbReference>
<dbReference type="Gene3D" id="2.40.30.170">
    <property type="match status" value="1"/>
</dbReference>
<dbReference type="Gene3D" id="2.40.50.100">
    <property type="match status" value="1"/>
</dbReference>
<dbReference type="HAMAP" id="MF_01544">
    <property type="entry name" value="AaeA"/>
    <property type="match status" value="1"/>
</dbReference>
<dbReference type="InterPro" id="IPR043602">
    <property type="entry name" value="CusB-like_dom_1"/>
</dbReference>
<dbReference type="InterPro" id="IPR032317">
    <property type="entry name" value="CusB_D23"/>
</dbReference>
<dbReference type="InterPro" id="IPR050393">
    <property type="entry name" value="MFP_Efflux_Pump"/>
</dbReference>
<dbReference type="InterPro" id="IPR022871">
    <property type="entry name" value="PHBA_efflux_pump_AaeA"/>
</dbReference>
<dbReference type="InterPro" id="IPR006143">
    <property type="entry name" value="RND_pump_MFP"/>
</dbReference>
<dbReference type="NCBIfam" id="NF007850">
    <property type="entry name" value="PRK10559.1"/>
    <property type="match status" value="1"/>
</dbReference>
<dbReference type="NCBIfam" id="TIGR01730">
    <property type="entry name" value="RND_mfp"/>
    <property type="match status" value="1"/>
</dbReference>
<dbReference type="PANTHER" id="PTHR30367:SF12">
    <property type="entry name" value="P-HYDROXYBENZOIC ACID EFFLUX PUMP SUBUNIT AAEA"/>
    <property type="match status" value="1"/>
</dbReference>
<dbReference type="PANTHER" id="PTHR30367">
    <property type="entry name" value="P-HYDROXYBENZOIC ACID EFFLUX PUMP SUBUNIT AAEA-RELATED"/>
    <property type="match status" value="1"/>
</dbReference>
<dbReference type="Pfam" id="PF00529">
    <property type="entry name" value="CusB_dom_1"/>
    <property type="match status" value="1"/>
</dbReference>
<dbReference type="Pfam" id="PF16576">
    <property type="entry name" value="HlyD_D23"/>
    <property type="match status" value="1"/>
</dbReference>
<dbReference type="SUPFAM" id="SSF111369">
    <property type="entry name" value="HlyD-like secretion proteins"/>
    <property type="match status" value="1"/>
</dbReference>
<comment type="function">
    <text evidence="1">Forms an efflux pump with AaeB.</text>
</comment>
<comment type="subcellular location">
    <subcellularLocation>
        <location evidence="1">Cell inner membrane</location>
        <topology evidence="1">Single-pass membrane protein</topology>
    </subcellularLocation>
</comment>
<comment type="induction">
    <text evidence="1">Positively coregulated with aaeB and aaeX by AaeR.</text>
</comment>
<comment type="similarity">
    <text evidence="1">Belongs to the membrane fusion protein (MFP) (TC 8.A.1) family.</text>
</comment>